<keyword id="KW-0004">4Fe-4S</keyword>
<keyword id="KW-0997">Cell inner membrane</keyword>
<keyword id="KW-1003">Cell membrane</keyword>
<keyword id="KW-0408">Iron</keyword>
<keyword id="KW-0411">Iron-sulfur</keyword>
<keyword id="KW-0472">Membrane</keyword>
<keyword id="KW-0479">Metal-binding</keyword>
<keyword id="KW-0520">NAD</keyword>
<keyword id="KW-0874">Quinone</keyword>
<keyword id="KW-1185">Reference proteome</keyword>
<keyword id="KW-0677">Repeat</keyword>
<keyword id="KW-1278">Translocase</keyword>
<keyword id="KW-0830">Ubiquinone</keyword>
<accession>Q9A6Y4</accession>
<organism>
    <name type="scientific">Caulobacter vibrioides (strain ATCC 19089 / CIP 103742 / CB 15)</name>
    <name type="common">Caulobacter crescentus</name>
    <dbReference type="NCBI Taxonomy" id="190650"/>
    <lineage>
        <taxon>Bacteria</taxon>
        <taxon>Pseudomonadati</taxon>
        <taxon>Pseudomonadota</taxon>
        <taxon>Alphaproteobacteria</taxon>
        <taxon>Caulobacterales</taxon>
        <taxon>Caulobacteraceae</taxon>
        <taxon>Caulobacter</taxon>
    </lineage>
</organism>
<name>NUOI_CAUVC</name>
<proteinExistence type="inferred from homology"/>
<gene>
    <name evidence="1" type="primary">nuoI</name>
    <name type="ordered locus">CC_1942</name>
</gene>
<sequence>MFQRITQAVKGAALLDFAGAFGLAMKYMVAPKKTVIYPNERNPQSPRFRGEHALRRYPSGEERCIACKLCEAICPAQAITIEAEPREDGSRRTTRYDIDMVKCIYCGLCQEACPVDAIVEGPNTEFATETREELYYDKERLLDNGDRWERLIAKNLELDAPYR</sequence>
<reference key="1">
    <citation type="journal article" date="2001" name="Proc. Natl. Acad. Sci. U.S.A.">
        <title>Complete genome sequence of Caulobacter crescentus.</title>
        <authorList>
            <person name="Nierman W.C."/>
            <person name="Feldblyum T.V."/>
            <person name="Laub M.T."/>
            <person name="Paulsen I.T."/>
            <person name="Nelson K.E."/>
            <person name="Eisen J.A."/>
            <person name="Heidelberg J.F."/>
            <person name="Alley M.R.K."/>
            <person name="Ohta N."/>
            <person name="Maddock J.R."/>
            <person name="Potocka I."/>
            <person name="Nelson W.C."/>
            <person name="Newton A."/>
            <person name="Stephens C."/>
            <person name="Phadke N.D."/>
            <person name="Ely B."/>
            <person name="DeBoy R.T."/>
            <person name="Dodson R.J."/>
            <person name="Durkin A.S."/>
            <person name="Gwinn M.L."/>
            <person name="Haft D.H."/>
            <person name="Kolonay J.F."/>
            <person name="Smit J."/>
            <person name="Craven M.B."/>
            <person name="Khouri H.M."/>
            <person name="Shetty J."/>
            <person name="Berry K.J."/>
            <person name="Utterback T.R."/>
            <person name="Tran K."/>
            <person name="Wolf A.M."/>
            <person name="Vamathevan J.J."/>
            <person name="Ermolaeva M.D."/>
            <person name="White O."/>
            <person name="Salzberg S.L."/>
            <person name="Venter J.C."/>
            <person name="Shapiro L."/>
            <person name="Fraser C.M."/>
        </authorList>
    </citation>
    <scope>NUCLEOTIDE SEQUENCE [LARGE SCALE GENOMIC DNA]</scope>
    <source>
        <strain>ATCC 19089 / CIP 103742 / CB 15</strain>
    </source>
</reference>
<comment type="function">
    <text evidence="1">NDH-1 shuttles electrons from NADH, via FMN and iron-sulfur (Fe-S) centers, to quinones in the respiratory chain. The immediate electron acceptor for the enzyme in this species is believed to be ubiquinone. Couples the redox reaction to proton translocation (for every two electrons transferred, four hydrogen ions are translocated across the cytoplasmic membrane), and thus conserves the redox energy in a proton gradient.</text>
</comment>
<comment type="catalytic activity">
    <reaction evidence="1">
        <text>a quinone + NADH + 5 H(+)(in) = a quinol + NAD(+) + 4 H(+)(out)</text>
        <dbReference type="Rhea" id="RHEA:57888"/>
        <dbReference type="ChEBI" id="CHEBI:15378"/>
        <dbReference type="ChEBI" id="CHEBI:24646"/>
        <dbReference type="ChEBI" id="CHEBI:57540"/>
        <dbReference type="ChEBI" id="CHEBI:57945"/>
        <dbReference type="ChEBI" id="CHEBI:132124"/>
    </reaction>
</comment>
<comment type="cofactor">
    <cofactor evidence="1">
        <name>[4Fe-4S] cluster</name>
        <dbReference type="ChEBI" id="CHEBI:49883"/>
    </cofactor>
    <text evidence="1">Binds 2 [4Fe-4S] clusters per subunit.</text>
</comment>
<comment type="subunit">
    <text evidence="1">NDH-1 is composed of 14 different subunits. Subunits NuoA, H, J, K, L, M, N constitute the membrane sector of the complex.</text>
</comment>
<comment type="subcellular location">
    <subcellularLocation>
        <location evidence="1">Cell inner membrane</location>
        <topology evidence="1">Peripheral membrane protein</topology>
    </subcellularLocation>
</comment>
<comment type="similarity">
    <text evidence="1">Belongs to the complex I 23 kDa subunit family.</text>
</comment>
<protein>
    <recommendedName>
        <fullName evidence="1">NADH-quinone oxidoreductase subunit I</fullName>
        <ecNumber evidence="1">7.1.1.-</ecNumber>
    </recommendedName>
    <alternativeName>
        <fullName evidence="1">NADH dehydrogenase I subunit I</fullName>
    </alternativeName>
    <alternativeName>
        <fullName evidence="1">NDH-1 subunit I</fullName>
    </alternativeName>
</protein>
<dbReference type="EC" id="7.1.1.-" evidence="1"/>
<dbReference type="EMBL" id="AE005673">
    <property type="protein sequence ID" value="AAK23917.1"/>
    <property type="molecule type" value="Genomic_DNA"/>
</dbReference>
<dbReference type="PIR" id="A87490">
    <property type="entry name" value="A87490"/>
</dbReference>
<dbReference type="RefSeq" id="NP_420749.1">
    <property type="nucleotide sequence ID" value="NC_002696.2"/>
</dbReference>
<dbReference type="RefSeq" id="WP_010919808.1">
    <property type="nucleotide sequence ID" value="NC_002696.2"/>
</dbReference>
<dbReference type="SMR" id="Q9A6Y4"/>
<dbReference type="STRING" id="190650.CC_1942"/>
<dbReference type="EnsemblBacteria" id="AAK23917">
    <property type="protein sequence ID" value="AAK23917"/>
    <property type="gene ID" value="CC_1942"/>
</dbReference>
<dbReference type="KEGG" id="ccr:CC_1942"/>
<dbReference type="PATRIC" id="fig|190650.5.peg.1959"/>
<dbReference type="eggNOG" id="COG1143">
    <property type="taxonomic scope" value="Bacteria"/>
</dbReference>
<dbReference type="HOGENOM" id="CLU_067218_5_1_5"/>
<dbReference type="BioCyc" id="CAULO:CC1942-MONOMER"/>
<dbReference type="Proteomes" id="UP000001816">
    <property type="component" value="Chromosome"/>
</dbReference>
<dbReference type="GO" id="GO:0005886">
    <property type="term" value="C:plasma membrane"/>
    <property type="evidence" value="ECO:0007669"/>
    <property type="project" value="UniProtKB-SubCell"/>
</dbReference>
<dbReference type="GO" id="GO:0051539">
    <property type="term" value="F:4 iron, 4 sulfur cluster binding"/>
    <property type="evidence" value="ECO:0007669"/>
    <property type="project" value="UniProtKB-KW"/>
</dbReference>
<dbReference type="GO" id="GO:0005506">
    <property type="term" value="F:iron ion binding"/>
    <property type="evidence" value="ECO:0007669"/>
    <property type="project" value="UniProtKB-UniRule"/>
</dbReference>
<dbReference type="GO" id="GO:0050136">
    <property type="term" value="F:NADH:ubiquinone reductase (non-electrogenic) activity"/>
    <property type="evidence" value="ECO:0007669"/>
    <property type="project" value="UniProtKB-UniRule"/>
</dbReference>
<dbReference type="GO" id="GO:0048038">
    <property type="term" value="F:quinone binding"/>
    <property type="evidence" value="ECO:0007669"/>
    <property type="project" value="UniProtKB-KW"/>
</dbReference>
<dbReference type="GO" id="GO:0009060">
    <property type="term" value="P:aerobic respiration"/>
    <property type="evidence" value="ECO:0007669"/>
    <property type="project" value="TreeGrafter"/>
</dbReference>
<dbReference type="FunFam" id="3.30.70.3270:FF:000001">
    <property type="entry name" value="NADH-quinone oxidoreductase subunit I 1"/>
    <property type="match status" value="1"/>
</dbReference>
<dbReference type="Gene3D" id="3.30.70.3270">
    <property type="match status" value="1"/>
</dbReference>
<dbReference type="HAMAP" id="MF_01351">
    <property type="entry name" value="NDH1_NuoI"/>
    <property type="match status" value="1"/>
</dbReference>
<dbReference type="InterPro" id="IPR017896">
    <property type="entry name" value="4Fe4S_Fe-S-bd"/>
</dbReference>
<dbReference type="InterPro" id="IPR017900">
    <property type="entry name" value="4Fe4S_Fe_S_CS"/>
</dbReference>
<dbReference type="InterPro" id="IPR010226">
    <property type="entry name" value="NADH_quinone_OxRdtase_chainI"/>
</dbReference>
<dbReference type="NCBIfam" id="TIGR01971">
    <property type="entry name" value="NuoI"/>
    <property type="match status" value="1"/>
</dbReference>
<dbReference type="NCBIfam" id="NF004538">
    <property type="entry name" value="PRK05888.1-4"/>
    <property type="match status" value="1"/>
</dbReference>
<dbReference type="NCBIfam" id="NF004539">
    <property type="entry name" value="PRK05888.1-5"/>
    <property type="match status" value="1"/>
</dbReference>
<dbReference type="PANTHER" id="PTHR10849:SF20">
    <property type="entry name" value="NADH DEHYDROGENASE [UBIQUINONE] IRON-SULFUR PROTEIN 8, MITOCHONDRIAL"/>
    <property type="match status" value="1"/>
</dbReference>
<dbReference type="PANTHER" id="PTHR10849">
    <property type="entry name" value="NADH DEHYDROGENASE UBIQUINONE IRON-SULFUR PROTEIN 8, MITOCHONDRIAL"/>
    <property type="match status" value="1"/>
</dbReference>
<dbReference type="Pfam" id="PF12838">
    <property type="entry name" value="Fer4_7"/>
    <property type="match status" value="1"/>
</dbReference>
<dbReference type="SUPFAM" id="SSF54862">
    <property type="entry name" value="4Fe-4S ferredoxins"/>
    <property type="match status" value="1"/>
</dbReference>
<dbReference type="PROSITE" id="PS00198">
    <property type="entry name" value="4FE4S_FER_1"/>
    <property type="match status" value="2"/>
</dbReference>
<dbReference type="PROSITE" id="PS51379">
    <property type="entry name" value="4FE4S_FER_2"/>
    <property type="match status" value="2"/>
</dbReference>
<feature type="chain" id="PRO_0000250897" description="NADH-quinone oxidoreductase subunit I">
    <location>
        <begin position="1"/>
        <end position="163"/>
    </location>
</feature>
<feature type="domain" description="4Fe-4S ferredoxin-type 1" evidence="1">
    <location>
        <begin position="55"/>
        <end position="84"/>
    </location>
</feature>
<feature type="domain" description="4Fe-4S ferredoxin-type 2" evidence="1">
    <location>
        <begin position="94"/>
        <end position="123"/>
    </location>
</feature>
<feature type="binding site" evidence="1">
    <location>
        <position position="64"/>
    </location>
    <ligand>
        <name>[4Fe-4S] cluster</name>
        <dbReference type="ChEBI" id="CHEBI:49883"/>
        <label>1</label>
    </ligand>
</feature>
<feature type="binding site" evidence="1">
    <location>
        <position position="67"/>
    </location>
    <ligand>
        <name>[4Fe-4S] cluster</name>
        <dbReference type="ChEBI" id="CHEBI:49883"/>
        <label>1</label>
    </ligand>
</feature>
<feature type="binding site" evidence="1">
    <location>
        <position position="70"/>
    </location>
    <ligand>
        <name>[4Fe-4S] cluster</name>
        <dbReference type="ChEBI" id="CHEBI:49883"/>
        <label>1</label>
    </ligand>
</feature>
<feature type="binding site" evidence="1">
    <location>
        <position position="74"/>
    </location>
    <ligand>
        <name>[4Fe-4S] cluster</name>
        <dbReference type="ChEBI" id="CHEBI:49883"/>
        <label>2</label>
    </ligand>
</feature>
<feature type="binding site" evidence="1">
    <location>
        <position position="103"/>
    </location>
    <ligand>
        <name>[4Fe-4S] cluster</name>
        <dbReference type="ChEBI" id="CHEBI:49883"/>
        <label>2</label>
    </ligand>
</feature>
<feature type="binding site" evidence="1">
    <location>
        <position position="106"/>
    </location>
    <ligand>
        <name>[4Fe-4S] cluster</name>
        <dbReference type="ChEBI" id="CHEBI:49883"/>
        <label>2</label>
    </ligand>
</feature>
<feature type="binding site" evidence="1">
    <location>
        <position position="109"/>
    </location>
    <ligand>
        <name>[4Fe-4S] cluster</name>
        <dbReference type="ChEBI" id="CHEBI:49883"/>
        <label>2</label>
    </ligand>
</feature>
<feature type="binding site" evidence="1">
    <location>
        <position position="113"/>
    </location>
    <ligand>
        <name>[4Fe-4S] cluster</name>
        <dbReference type="ChEBI" id="CHEBI:49883"/>
        <label>1</label>
    </ligand>
</feature>
<evidence type="ECO:0000255" key="1">
    <source>
        <dbReference type="HAMAP-Rule" id="MF_01351"/>
    </source>
</evidence>